<comment type="subcellular location">
    <subcellularLocation>
        <location evidence="4">Secreted</location>
    </subcellularLocation>
</comment>
<comment type="tissue specificity">
    <text evidence="2">Detected in the thoracic perisympathetic organs in larvae, and the dorsal ganglionic sheath in adults (at protein level).</text>
</comment>
<comment type="mass spectrometry"/>
<comment type="similarity">
    <text evidence="1">Belongs to the FARP (FMRFamide related peptide) family.</text>
</comment>
<keyword id="KW-0027">Amidation</keyword>
<keyword id="KW-0903">Direct protein sequencing</keyword>
<keyword id="KW-0527">Neuropeptide</keyword>
<keyword id="KW-0964">Secreted</keyword>
<reference evidence="4" key="1">
    <citation type="journal article" date="2009" name="Gen. Comp. Endocrinol.">
        <title>Extended FMRFamides in dipteran insects: conservative expression in the neuroendocrine system is accompanied by rapid sequence evolution.</title>
        <authorList>
            <person name="Rahman M.M."/>
            <person name="Fromm B."/>
            <person name="Neupert S."/>
            <person name="Kreusch S."/>
            <person name="Predel R."/>
        </authorList>
    </citation>
    <scope>PROTEIN SEQUENCE</scope>
    <scope>TISSUE SPECIFICITY</scope>
    <scope>MASS SPECTROMETRY</scope>
    <scope>AMIDATION AT PHE-8</scope>
    <source>
        <strain evidence="2">Bangladesh</strain>
        <strain evidence="2">Goondiwindi</strain>
        <tissue evidence="2">Dorsal ganglionic sheath</tissue>
    </source>
</reference>
<evidence type="ECO:0000255" key="1"/>
<evidence type="ECO:0000269" key="2">
    <source>
    </source>
</evidence>
<evidence type="ECO:0000303" key="3">
    <source>
    </source>
</evidence>
<evidence type="ECO:0000305" key="4"/>
<protein>
    <recommendedName>
        <fullName>FMRFamide-4</fullName>
    </recommendedName>
    <alternativeName>
        <fullName evidence="3">LucFMRFamide-4</fullName>
    </alternativeName>
</protein>
<feature type="peptide" id="PRO_0000371750" description="FMRFamide-4">
    <location>
        <begin position="1"/>
        <end position="8"/>
    </location>
</feature>
<feature type="modified residue" description="Phenylalanine amide" evidence="2">
    <location>
        <position position="8"/>
    </location>
</feature>
<organism>
    <name type="scientific">Lucilia cuprina</name>
    <name type="common">Green bottle fly</name>
    <name type="synonym">Australian sheep blowfly</name>
    <dbReference type="NCBI Taxonomy" id="7375"/>
    <lineage>
        <taxon>Eukaryota</taxon>
        <taxon>Metazoa</taxon>
        <taxon>Ecdysozoa</taxon>
        <taxon>Arthropoda</taxon>
        <taxon>Hexapoda</taxon>
        <taxon>Insecta</taxon>
        <taxon>Pterygota</taxon>
        <taxon>Neoptera</taxon>
        <taxon>Endopterygota</taxon>
        <taxon>Diptera</taxon>
        <taxon>Brachycera</taxon>
        <taxon>Muscomorpha</taxon>
        <taxon>Oestroidea</taxon>
        <taxon>Calliphoridae</taxon>
        <taxon>Luciliinae</taxon>
        <taxon>Lucilia</taxon>
    </lineage>
</organism>
<sequence>GGNDFMRF</sequence>
<accession>P85451</accession>
<name>FAR4_LUCCU</name>
<dbReference type="GO" id="GO:0005576">
    <property type="term" value="C:extracellular region"/>
    <property type="evidence" value="ECO:0007669"/>
    <property type="project" value="UniProtKB-SubCell"/>
</dbReference>
<dbReference type="GO" id="GO:0007218">
    <property type="term" value="P:neuropeptide signaling pathway"/>
    <property type="evidence" value="ECO:0007669"/>
    <property type="project" value="UniProtKB-KW"/>
</dbReference>
<proteinExistence type="evidence at protein level"/>